<reference key="1">
    <citation type="submission" date="2006-08" db="EMBL/GenBank/DDBJ databases">
        <title>Complete sequence of chromosome 1 of Shewanella sp. MR-7.</title>
        <authorList>
            <person name="Copeland A."/>
            <person name="Lucas S."/>
            <person name="Lapidus A."/>
            <person name="Barry K."/>
            <person name="Detter J.C."/>
            <person name="Glavina del Rio T."/>
            <person name="Hammon N."/>
            <person name="Israni S."/>
            <person name="Dalin E."/>
            <person name="Tice H."/>
            <person name="Pitluck S."/>
            <person name="Kiss H."/>
            <person name="Brettin T."/>
            <person name="Bruce D."/>
            <person name="Han C."/>
            <person name="Tapia R."/>
            <person name="Gilna P."/>
            <person name="Schmutz J."/>
            <person name="Larimer F."/>
            <person name="Land M."/>
            <person name="Hauser L."/>
            <person name="Kyrpides N."/>
            <person name="Mikhailova N."/>
            <person name="Nealson K."/>
            <person name="Konstantinidis K."/>
            <person name="Klappenbach J."/>
            <person name="Tiedje J."/>
            <person name="Richardson P."/>
        </authorList>
    </citation>
    <scope>NUCLEOTIDE SEQUENCE [LARGE SCALE GENOMIC DNA]</scope>
    <source>
        <strain>MR-7</strain>
    </source>
</reference>
<feature type="chain" id="PRO_1000003264" description="Ribosome-recycling factor">
    <location>
        <begin position="1"/>
        <end position="185"/>
    </location>
</feature>
<accession>Q0HT65</accession>
<protein>
    <recommendedName>
        <fullName evidence="1">Ribosome-recycling factor</fullName>
        <shortName evidence="1">RRF</shortName>
    </recommendedName>
    <alternativeName>
        <fullName evidence="1">Ribosome-releasing factor</fullName>
    </alternativeName>
</protein>
<gene>
    <name evidence="1" type="primary">frr</name>
    <name type="ordered locus">Shewmr7_2705</name>
</gene>
<comment type="function">
    <text evidence="1">Responsible for the release of ribosomes from messenger RNA at the termination of protein biosynthesis. May increase the efficiency of translation by recycling ribosomes from one round of translation to another.</text>
</comment>
<comment type="subcellular location">
    <subcellularLocation>
        <location evidence="1">Cytoplasm</location>
    </subcellularLocation>
</comment>
<comment type="similarity">
    <text evidence="1">Belongs to the RRF family.</text>
</comment>
<name>RRF_SHESR</name>
<evidence type="ECO:0000255" key="1">
    <source>
        <dbReference type="HAMAP-Rule" id="MF_00040"/>
    </source>
</evidence>
<organism>
    <name type="scientific">Shewanella sp. (strain MR-7)</name>
    <dbReference type="NCBI Taxonomy" id="60481"/>
    <lineage>
        <taxon>Bacteria</taxon>
        <taxon>Pseudomonadati</taxon>
        <taxon>Pseudomonadota</taxon>
        <taxon>Gammaproteobacteria</taxon>
        <taxon>Alteromonadales</taxon>
        <taxon>Shewanellaceae</taxon>
        <taxon>Shewanella</taxon>
    </lineage>
</organism>
<sequence length="185" mass="20615">MIADIKKDAQERMGKCVEATKNQMAKVRTGRAHPSLLDSIQVSYYGTMTPLNQVANVGIEDARTLSVTVFDRSAIQAVEKAIMSSDLGLNPMSAGATLRIPLPALTEERRKDFIKVVRAEAEGGRVAIRNVRRDAISDVKKLEKAKECTEDDVRRFEDEVQKFTDAHIKKVDEILAAKEIELMEV</sequence>
<keyword id="KW-0963">Cytoplasm</keyword>
<keyword id="KW-0648">Protein biosynthesis</keyword>
<dbReference type="EMBL" id="CP000444">
    <property type="protein sequence ID" value="ABI43690.1"/>
    <property type="molecule type" value="Genomic_DNA"/>
</dbReference>
<dbReference type="SMR" id="Q0HT65"/>
<dbReference type="KEGG" id="shm:Shewmr7_2705"/>
<dbReference type="HOGENOM" id="CLU_073981_2_1_6"/>
<dbReference type="GO" id="GO:0005829">
    <property type="term" value="C:cytosol"/>
    <property type="evidence" value="ECO:0007669"/>
    <property type="project" value="GOC"/>
</dbReference>
<dbReference type="GO" id="GO:0043023">
    <property type="term" value="F:ribosomal large subunit binding"/>
    <property type="evidence" value="ECO:0007669"/>
    <property type="project" value="TreeGrafter"/>
</dbReference>
<dbReference type="GO" id="GO:0002184">
    <property type="term" value="P:cytoplasmic translational termination"/>
    <property type="evidence" value="ECO:0007669"/>
    <property type="project" value="TreeGrafter"/>
</dbReference>
<dbReference type="CDD" id="cd00520">
    <property type="entry name" value="RRF"/>
    <property type="match status" value="1"/>
</dbReference>
<dbReference type="FunFam" id="1.10.132.20:FF:000001">
    <property type="entry name" value="Ribosome-recycling factor"/>
    <property type="match status" value="1"/>
</dbReference>
<dbReference type="FunFam" id="3.30.1360.40:FF:000001">
    <property type="entry name" value="Ribosome-recycling factor"/>
    <property type="match status" value="1"/>
</dbReference>
<dbReference type="Gene3D" id="3.30.1360.40">
    <property type="match status" value="1"/>
</dbReference>
<dbReference type="Gene3D" id="1.10.132.20">
    <property type="entry name" value="Ribosome-recycling factor"/>
    <property type="match status" value="1"/>
</dbReference>
<dbReference type="HAMAP" id="MF_00040">
    <property type="entry name" value="RRF"/>
    <property type="match status" value="1"/>
</dbReference>
<dbReference type="InterPro" id="IPR002661">
    <property type="entry name" value="Ribosome_recyc_fac"/>
</dbReference>
<dbReference type="InterPro" id="IPR023584">
    <property type="entry name" value="Ribosome_recyc_fac_dom"/>
</dbReference>
<dbReference type="InterPro" id="IPR036191">
    <property type="entry name" value="RRF_sf"/>
</dbReference>
<dbReference type="NCBIfam" id="TIGR00496">
    <property type="entry name" value="frr"/>
    <property type="match status" value="1"/>
</dbReference>
<dbReference type="PANTHER" id="PTHR20982:SF3">
    <property type="entry name" value="MITOCHONDRIAL RIBOSOME RECYCLING FACTOR PSEUDO 1"/>
    <property type="match status" value="1"/>
</dbReference>
<dbReference type="PANTHER" id="PTHR20982">
    <property type="entry name" value="RIBOSOME RECYCLING FACTOR"/>
    <property type="match status" value="1"/>
</dbReference>
<dbReference type="Pfam" id="PF01765">
    <property type="entry name" value="RRF"/>
    <property type="match status" value="1"/>
</dbReference>
<dbReference type="SUPFAM" id="SSF55194">
    <property type="entry name" value="Ribosome recycling factor, RRF"/>
    <property type="match status" value="1"/>
</dbReference>
<proteinExistence type="inferred from homology"/>